<proteinExistence type="inferred from homology"/>
<name>RSMG_RUEST</name>
<gene>
    <name evidence="1" type="primary">rsmG</name>
    <name type="ordered locus">TM1040_2866</name>
</gene>
<accession>Q1GCL8</accession>
<sequence>MSDGRGNLELDVSRETLERLMVFSEVLKKWNPKINLVSRKSIDDLWTRHILDSIQVFDAAPEGGAWLDIGSGGGLPGIIVAILAAEKSPDTRITLMESDLRKCAFLRNAARECGVSVTVKSKRIESAPEENCDVLSARALADLDNLLGFAERHLAENGTAMFPKGANWKKEVDNARKRWRFECDEITSVTEPGAVILKIKGVERV</sequence>
<evidence type="ECO:0000255" key="1">
    <source>
        <dbReference type="HAMAP-Rule" id="MF_00074"/>
    </source>
</evidence>
<dbReference type="EC" id="2.1.1.170" evidence="1"/>
<dbReference type="EMBL" id="CP000377">
    <property type="protein sequence ID" value="ABF65598.1"/>
    <property type="molecule type" value="Genomic_DNA"/>
</dbReference>
<dbReference type="RefSeq" id="WP_011540179.1">
    <property type="nucleotide sequence ID" value="NC_008044.1"/>
</dbReference>
<dbReference type="SMR" id="Q1GCL8"/>
<dbReference type="STRING" id="292414.TM1040_2866"/>
<dbReference type="KEGG" id="sit:TM1040_2866"/>
<dbReference type="eggNOG" id="COG0357">
    <property type="taxonomic scope" value="Bacteria"/>
</dbReference>
<dbReference type="HOGENOM" id="CLU_065341_1_1_5"/>
<dbReference type="OrthoDB" id="9808773at2"/>
<dbReference type="Proteomes" id="UP000000636">
    <property type="component" value="Chromosome"/>
</dbReference>
<dbReference type="GO" id="GO:0005829">
    <property type="term" value="C:cytosol"/>
    <property type="evidence" value="ECO:0007669"/>
    <property type="project" value="TreeGrafter"/>
</dbReference>
<dbReference type="GO" id="GO:0070043">
    <property type="term" value="F:rRNA (guanine-N7-)-methyltransferase activity"/>
    <property type="evidence" value="ECO:0007669"/>
    <property type="project" value="UniProtKB-UniRule"/>
</dbReference>
<dbReference type="Gene3D" id="3.40.50.150">
    <property type="entry name" value="Vaccinia Virus protein VP39"/>
    <property type="match status" value="1"/>
</dbReference>
<dbReference type="HAMAP" id="MF_00074">
    <property type="entry name" value="16SrRNA_methyltr_G"/>
    <property type="match status" value="1"/>
</dbReference>
<dbReference type="InterPro" id="IPR003682">
    <property type="entry name" value="rRNA_ssu_MeTfrase_G"/>
</dbReference>
<dbReference type="InterPro" id="IPR029063">
    <property type="entry name" value="SAM-dependent_MTases_sf"/>
</dbReference>
<dbReference type="NCBIfam" id="TIGR00138">
    <property type="entry name" value="rsmG_gidB"/>
    <property type="match status" value="1"/>
</dbReference>
<dbReference type="PANTHER" id="PTHR31760">
    <property type="entry name" value="S-ADENOSYL-L-METHIONINE-DEPENDENT METHYLTRANSFERASES SUPERFAMILY PROTEIN"/>
    <property type="match status" value="1"/>
</dbReference>
<dbReference type="PANTHER" id="PTHR31760:SF0">
    <property type="entry name" value="S-ADENOSYL-L-METHIONINE-DEPENDENT METHYLTRANSFERASES SUPERFAMILY PROTEIN"/>
    <property type="match status" value="1"/>
</dbReference>
<dbReference type="Pfam" id="PF02527">
    <property type="entry name" value="GidB"/>
    <property type="match status" value="1"/>
</dbReference>
<dbReference type="PIRSF" id="PIRSF003078">
    <property type="entry name" value="GidB"/>
    <property type="match status" value="1"/>
</dbReference>
<dbReference type="SUPFAM" id="SSF53335">
    <property type="entry name" value="S-adenosyl-L-methionine-dependent methyltransferases"/>
    <property type="match status" value="1"/>
</dbReference>
<reference key="1">
    <citation type="submission" date="2006-05" db="EMBL/GenBank/DDBJ databases">
        <title>Complete sequence of chromosome of Silicibacter sp. TM1040.</title>
        <authorList>
            <consortium name="US DOE Joint Genome Institute"/>
            <person name="Copeland A."/>
            <person name="Lucas S."/>
            <person name="Lapidus A."/>
            <person name="Barry K."/>
            <person name="Detter J.C."/>
            <person name="Glavina del Rio T."/>
            <person name="Hammon N."/>
            <person name="Israni S."/>
            <person name="Dalin E."/>
            <person name="Tice H."/>
            <person name="Pitluck S."/>
            <person name="Brettin T."/>
            <person name="Bruce D."/>
            <person name="Han C."/>
            <person name="Tapia R."/>
            <person name="Goodwin L."/>
            <person name="Thompson L.S."/>
            <person name="Gilna P."/>
            <person name="Schmutz J."/>
            <person name="Larimer F."/>
            <person name="Land M."/>
            <person name="Hauser L."/>
            <person name="Kyrpides N."/>
            <person name="Kim E."/>
            <person name="Belas R."/>
            <person name="Moran M.A."/>
            <person name="Buchan A."/>
            <person name="Gonzalez J.M."/>
            <person name="Schell M.A."/>
            <person name="Sun F."/>
            <person name="Richardson P."/>
        </authorList>
    </citation>
    <scope>NUCLEOTIDE SEQUENCE [LARGE SCALE GENOMIC DNA]</scope>
    <source>
        <strain>TM1040</strain>
    </source>
</reference>
<feature type="chain" id="PRO_0000335428" description="Ribosomal RNA small subunit methyltransferase G">
    <location>
        <begin position="1"/>
        <end position="205"/>
    </location>
</feature>
<feature type="binding site" evidence="1">
    <location>
        <position position="70"/>
    </location>
    <ligand>
        <name>S-adenosyl-L-methionine</name>
        <dbReference type="ChEBI" id="CHEBI:59789"/>
    </ligand>
</feature>
<feature type="binding site" evidence="1">
    <location>
        <position position="75"/>
    </location>
    <ligand>
        <name>S-adenosyl-L-methionine</name>
        <dbReference type="ChEBI" id="CHEBI:59789"/>
    </ligand>
</feature>
<feature type="binding site" evidence="1">
    <location>
        <begin position="124"/>
        <end position="125"/>
    </location>
    <ligand>
        <name>S-adenosyl-L-methionine</name>
        <dbReference type="ChEBI" id="CHEBI:59789"/>
    </ligand>
</feature>
<feature type="binding site" evidence="1">
    <location>
        <position position="138"/>
    </location>
    <ligand>
        <name>S-adenosyl-L-methionine</name>
        <dbReference type="ChEBI" id="CHEBI:59789"/>
    </ligand>
</feature>
<protein>
    <recommendedName>
        <fullName evidence="1">Ribosomal RNA small subunit methyltransferase G</fullName>
        <ecNumber evidence="1">2.1.1.170</ecNumber>
    </recommendedName>
    <alternativeName>
        <fullName evidence="1">16S rRNA 7-methylguanosine methyltransferase</fullName>
        <shortName evidence="1">16S rRNA m7G methyltransferase</shortName>
    </alternativeName>
</protein>
<comment type="function">
    <text evidence="1">Specifically methylates the N7 position of guanine in position 527 of 16S rRNA.</text>
</comment>
<comment type="catalytic activity">
    <reaction evidence="1">
        <text>guanosine(527) in 16S rRNA + S-adenosyl-L-methionine = N(7)-methylguanosine(527) in 16S rRNA + S-adenosyl-L-homocysteine</text>
        <dbReference type="Rhea" id="RHEA:42732"/>
        <dbReference type="Rhea" id="RHEA-COMP:10209"/>
        <dbReference type="Rhea" id="RHEA-COMP:10210"/>
        <dbReference type="ChEBI" id="CHEBI:57856"/>
        <dbReference type="ChEBI" id="CHEBI:59789"/>
        <dbReference type="ChEBI" id="CHEBI:74269"/>
        <dbReference type="ChEBI" id="CHEBI:74480"/>
        <dbReference type="EC" id="2.1.1.170"/>
    </reaction>
</comment>
<comment type="subcellular location">
    <subcellularLocation>
        <location evidence="1">Cytoplasm</location>
    </subcellularLocation>
</comment>
<comment type="similarity">
    <text evidence="1">Belongs to the methyltransferase superfamily. RNA methyltransferase RsmG family.</text>
</comment>
<keyword id="KW-0963">Cytoplasm</keyword>
<keyword id="KW-0489">Methyltransferase</keyword>
<keyword id="KW-1185">Reference proteome</keyword>
<keyword id="KW-0698">rRNA processing</keyword>
<keyword id="KW-0949">S-adenosyl-L-methionine</keyword>
<keyword id="KW-0808">Transferase</keyword>
<organism>
    <name type="scientific">Ruegeria sp. (strain TM1040)</name>
    <name type="common">Silicibacter sp.</name>
    <dbReference type="NCBI Taxonomy" id="292414"/>
    <lineage>
        <taxon>Bacteria</taxon>
        <taxon>Pseudomonadati</taxon>
        <taxon>Pseudomonadota</taxon>
        <taxon>Alphaproteobacteria</taxon>
        <taxon>Rhodobacterales</taxon>
        <taxon>Roseobacteraceae</taxon>
        <taxon>Ruegeria</taxon>
    </lineage>
</organism>